<protein>
    <recommendedName>
        <fullName evidence="1">ATP synthase subunit delta</fullName>
    </recommendedName>
    <alternativeName>
        <fullName evidence="1">ATP synthase F(1) sector subunit delta</fullName>
    </alternativeName>
    <alternativeName>
        <fullName evidence="1">F-type ATPase subunit delta</fullName>
        <shortName evidence="1">F-ATPase subunit delta</shortName>
    </alternativeName>
</protein>
<sequence length="182" mass="19701">MPLLNTITTPYAEAFLQVAESRKEVDQVVDQAKAVLALWNDCPELSGAMASPVLEVEAKKAALQKLFANQVTPSFLNLLKLLADRQRIGVLDAVLERLIELYREQRNIALATVTSAAELSEQQQAALQKKVQAVANTDKLEINLKIDPDLIGGFVVNVGSKVIDASVAGQVRRLGLALAKVS</sequence>
<feature type="chain" id="PRO_0000371066" description="ATP synthase subunit delta">
    <location>
        <begin position="1"/>
        <end position="182"/>
    </location>
</feature>
<accession>Q7V5S6</accession>
<organism>
    <name type="scientific">Prochlorococcus marinus (strain MIT 9313)</name>
    <dbReference type="NCBI Taxonomy" id="74547"/>
    <lineage>
        <taxon>Bacteria</taxon>
        <taxon>Bacillati</taxon>
        <taxon>Cyanobacteriota</taxon>
        <taxon>Cyanophyceae</taxon>
        <taxon>Synechococcales</taxon>
        <taxon>Prochlorococcaceae</taxon>
        <taxon>Prochlorococcus</taxon>
    </lineage>
</organism>
<proteinExistence type="inferred from homology"/>
<comment type="function">
    <text evidence="1">F(1)F(0) ATP synthase produces ATP from ADP in the presence of a proton or sodium gradient. F-type ATPases consist of two structural domains, F(1) containing the extramembraneous catalytic core and F(0) containing the membrane proton channel, linked together by a central stalk and a peripheral stalk. During catalysis, ATP synthesis in the catalytic domain of F(1) is coupled via a rotary mechanism of the central stalk subunits to proton translocation.</text>
</comment>
<comment type="function">
    <text evidence="1">This protein is part of the stalk that links CF(0) to CF(1). It either transmits conformational changes from CF(0) to CF(1) or is implicated in proton conduction.</text>
</comment>
<comment type="subunit">
    <text evidence="1">F-type ATPases have 2 components, F(1) - the catalytic core - and F(0) - the membrane proton channel. F(1) has five subunits: alpha(3), beta(3), gamma(1), delta(1), epsilon(1). CF(0) has four main subunits: a(1), b(1), b'(1) and c(10-14). The alpha and beta chains form an alternating ring which encloses part of the gamma chain. F(1) is attached to F(0) by a central stalk formed by the gamma and epsilon chains, while a peripheral stalk is formed by the delta, b and b' chains.</text>
</comment>
<comment type="subcellular location">
    <subcellularLocation>
        <location evidence="1">Cellular thylakoid membrane</location>
        <topology evidence="1">Peripheral membrane protein</topology>
    </subcellularLocation>
</comment>
<comment type="similarity">
    <text evidence="1">Belongs to the ATPase delta chain family.</text>
</comment>
<evidence type="ECO:0000255" key="1">
    <source>
        <dbReference type="HAMAP-Rule" id="MF_01416"/>
    </source>
</evidence>
<reference key="1">
    <citation type="journal article" date="2003" name="Nature">
        <title>Genome divergence in two Prochlorococcus ecotypes reflects oceanic niche differentiation.</title>
        <authorList>
            <person name="Rocap G."/>
            <person name="Larimer F.W."/>
            <person name="Lamerdin J.E."/>
            <person name="Malfatti S."/>
            <person name="Chain P."/>
            <person name="Ahlgren N.A."/>
            <person name="Arellano A."/>
            <person name="Coleman M."/>
            <person name="Hauser L."/>
            <person name="Hess W.R."/>
            <person name="Johnson Z.I."/>
            <person name="Land M.L."/>
            <person name="Lindell D."/>
            <person name="Post A.F."/>
            <person name="Regala W."/>
            <person name="Shah M."/>
            <person name="Shaw S.L."/>
            <person name="Steglich C."/>
            <person name="Sullivan M.B."/>
            <person name="Ting C.S."/>
            <person name="Tolonen A."/>
            <person name="Webb E.A."/>
            <person name="Zinser E.R."/>
            <person name="Chisholm S.W."/>
        </authorList>
    </citation>
    <scope>NUCLEOTIDE SEQUENCE [LARGE SCALE GENOMIC DNA]</scope>
    <source>
        <strain>MIT 9313</strain>
    </source>
</reference>
<keyword id="KW-0066">ATP synthesis</keyword>
<keyword id="KW-0139">CF(1)</keyword>
<keyword id="KW-0375">Hydrogen ion transport</keyword>
<keyword id="KW-0406">Ion transport</keyword>
<keyword id="KW-0472">Membrane</keyword>
<keyword id="KW-1185">Reference proteome</keyword>
<keyword id="KW-0793">Thylakoid</keyword>
<keyword id="KW-0813">Transport</keyword>
<dbReference type="EMBL" id="BX548175">
    <property type="protein sequence ID" value="CAE21643.1"/>
    <property type="molecule type" value="Genomic_DNA"/>
</dbReference>
<dbReference type="RefSeq" id="WP_011130836.1">
    <property type="nucleotide sequence ID" value="NC_005071.1"/>
</dbReference>
<dbReference type="SMR" id="Q7V5S6"/>
<dbReference type="KEGG" id="pmt:PMT_1468"/>
<dbReference type="eggNOG" id="COG0712">
    <property type="taxonomic scope" value="Bacteria"/>
</dbReference>
<dbReference type="HOGENOM" id="CLU_085114_4_1_3"/>
<dbReference type="OrthoDB" id="9802471at2"/>
<dbReference type="Proteomes" id="UP000001423">
    <property type="component" value="Chromosome"/>
</dbReference>
<dbReference type="GO" id="GO:0031676">
    <property type="term" value="C:plasma membrane-derived thylakoid membrane"/>
    <property type="evidence" value="ECO:0007669"/>
    <property type="project" value="UniProtKB-SubCell"/>
</dbReference>
<dbReference type="GO" id="GO:0045259">
    <property type="term" value="C:proton-transporting ATP synthase complex"/>
    <property type="evidence" value="ECO:0007669"/>
    <property type="project" value="UniProtKB-KW"/>
</dbReference>
<dbReference type="GO" id="GO:0046933">
    <property type="term" value="F:proton-transporting ATP synthase activity, rotational mechanism"/>
    <property type="evidence" value="ECO:0007669"/>
    <property type="project" value="UniProtKB-UniRule"/>
</dbReference>
<dbReference type="Gene3D" id="1.10.520.20">
    <property type="entry name" value="N-terminal domain of the delta subunit of the F1F0-ATP synthase"/>
    <property type="match status" value="1"/>
</dbReference>
<dbReference type="HAMAP" id="MF_01416">
    <property type="entry name" value="ATP_synth_delta_bact"/>
    <property type="match status" value="1"/>
</dbReference>
<dbReference type="InterPro" id="IPR026015">
    <property type="entry name" value="ATP_synth_OSCP/delta_N_sf"/>
</dbReference>
<dbReference type="InterPro" id="IPR020781">
    <property type="entry name" value="ATPase_OSCP/d_CS"/>
</dbReference>
<dbReference type="InterPro" id="IPR000711">
    <property type="entry name" value="ATPase_OSCP/dsu"/>
</dbReference>
<dbReference type="NCBIfam" id="TIGR01145">
    <property type="entry name" value="ATP_synt_delta"/>
    <property type="match status" value="1"/>
</dbReference>
<dbReference type="PANTHER" id="PTHR11910">
    <property type="entry name" value="ATP SYNTHASE DELTA CHAIN"/>
    <property type="match status" value="1"/>
</dbReference>
<dbReference type="Pfam" id="PF00213">
    <property type="entry name" value="OSCP"/>
    <property type="match status" value="1"/>
</dbReference>
<dbReference type="PRINTS" id="PR00125">
    <property type="entry name" value="ATPASEDELTA"/>
</dbReference>
<dbReference type="SUPFAM" id="SSF47928">
    <property type="entry name" value="N-terminal domain of the delta subunit of the F1F0-ATP synthase"/>
    <property type="match status" value="1"/>
</dbReference>
<dbReference type="PROSITE" id="PS00389">
    <property type="entry name" value="ATPASE_DELTA"/>
    <property type="match status" value="1"/>
</dbReference>
<name>ATPD_PROMM</name>
<gene>
    <name evidence="1" type="primary">atpH</name>
    <name evidence="1" type="synonym">atpD</name>
    <name type="ordered locus">PMT_1468</name>
</gene>